<accession>P08028</accession>
<organism>
    <name type="scientific">Influenza C virus (strain C/California/1978)</name>
    <dbReference type="NCBI Taxonomy" id="203224"/>
    <lineage>
        <taxon>Viruses</taxon>
        <taxon>Riboviria</taxon>
        <taxon>Orthornavirae</taxon>
        <taxon>Negarnaviricota</taxon>
        <taxon>Polyploviricotina</taxon>
        <taxon>Insthoviricetes</taxon>
        <taxon>Articulavirales</taxon>
        <taxon>Orthomyxoviridae</taxon>
        <taxon>Gammainfluenzavirus</taxon>
        <taxon>Gammainfluenzavirus influenzae</taxon>
        <taxon>Influenza C virus</taxon>
    </lineage>
</organism>
<dbReference type="EMBL" id="M17700">
    <property type="protein sequence ID" value="AAA43798.1"/>
    <property type="molecule type" value="Genomic_RNA"/>
</dbReference>
<dbReference type="SMR" id="P08028"/>
<dbReference type="GO" id="GO:0019029">
    <property type="term" value="C:helical viral capsid"/>
    <property type="evidence" value="ECO:0007669"/>
    <property type="project" value="UniProtKB-UniRule"/>
</dbReference>
<dbReference type="GO" id="GO:0043657">
    <property type="term" value="C:host cell"/>
    <property type="evidence" value="ECO:0007669"/>
    <property type="project" value="GOC"/>
</dbReference>
<dbReference type="GO" id="GO:0042025">
    <property type="term" value="C:host cell nucleus"/>
    <property type="evidence" value="ECO:0007669"/>
    <property type="project" value="UniProtKB-SubCell"/>
</dbReference>
<dbReference type="GO" id="GO:1990904">
    <property type="term" value="C:ribonucleoprotein complex"/>
    <property type="evidence" value="ECO:0007669"/>
    <property type="project" value="UniProtKB-KW"/>
</dbReference>
<dbReference type="GO" id="GO:0019013">
    <property type="term" value="C:viral nucleocapsid"/>
    <property type="evidence" value="ECO:0007669"/>
    <property type="project" value="UniProtKB-UniRule"/>
</dbReference>
<dbReference type="GO" id="GO:0003723">
    <property type="term" value="F:RNA binding"/>
    <property type="evidence" value="ECO:0007669"/>
    <property type="project" value="UniProtKB-UniRule"/>
</dbReference>
<dbReference type="GO" id="GO:0005198">
    <property type="term" value="F:structural molecule activity"/>
    <property type="evidence" value="ECO:0007669"/>
    <property type="project" value="UniProtKB-UniRule"/>
</dbReference>
<dbReference type="GO" id="GO:0046718">
    <property type="term" value="P:symbiont entry into host cell"/>
    <property type="evidence" value="ECO:0007669"/>
    <property type="project" value="UniProtKB-KW"/>
</dbReference>
<dbReference type="GO" id="GO:0075732">
    <property type="term" value="P:viral penetration into host nucleus"/>
    <property type="evidence" value="ECO:0007669"/>
    <property type="project" value="UniProtKB-UniRule"/>
</dbReference>
<dbReference type="HAMAP" id="MF_04070">
    <property type="entry name" value="INFV_NCAP"/>
    <property type="match status" value="1"/>
</dbReference>
<dbReference type="InterPro" id="IPR002141">
    <property type="entry name" value="Flu_NP"/>
</dbReference>
<dbReference type="Pfam" id="PF00506">
    <property type="entry name" value="Flu_NP"/>
    <property type="match status" value="1"/>
</dbReference>
<dbReference type="SUPFAM" id="SSF161003">
    <property type="entry name" value="flu NP-like"/>
    <property type="match status" value="1"/>
</dbReference>
<evidence type="ECO:0000255" key="1">
    <source>
        <dbReference type="HAMAP-Rule" id="MF_04070"/>
    </source>
</evidence>
<evidence type="ECO:0000256" key="2">
    <source>
        <dbReference type="SAM" id="MobiDB-lite"/>
    </source>
</evidence>
<organismHost>
    <name type="scientific">Homo sapiens</name>
    <name type="common">Human</name>
    <dbReference type="NCBI Taxonomy" id="9606"/>
</organismHost>
<organismHost>
    <name type="scientific">Sus scrofa</name>
    <name type="common">Pig</name>
    <dbReference type="NCBI Taxonomy" id="9823"/>
</organismHost>
<name>NCAP_INCCA</name>
<protein>
    <recommendedName>
        <fullName evidence="1">Nucleoprotein</fullName>
    </recommendedName>
    <alternativeName>
        <fullName evidence="1">Nucleocapsid protein</fullName>
        <shortName evidence="1">Protein N</shortName>
    </alternativeName>
</protein>
<feature type="chain" id="PRO_0000079145" description="Nucleoprotein">
    <location>
        <begin position="1"/>
        <end position="565"/>
    </location>
</feature>
<feature type="region of interest" description="Disordered" evidence="2">
    <location>
        <begin position="518"/>
        <end position="565"/>
    </location>
</feature>
<feature type="compositionally biased region" description="Polar residues" evidence="2">
    <location>
        <begin position="554"/>
        <end position="565"/>
    </location>
</feature>
<proteinExistence type="inferred from homology"/>
<sequence length="565" mass="63598">MSDRRQNRKTPDEQRKANALIINENIEAYIAICKEVGLNGDEMLILENGIAIEKAIRICCDGKYQEKREKKAREAQRADSNFNADSIGIRLVKRAGSGTNITYHAVVELTSRSRIVQILKSHWGNELNRAKIAGKRLGFSALFASNLEAIIYQRGRNAARRNGSAELFTLTQGAGIETRYKWIMEKHIGIGVLIADAKGLINGKREGKRGVDANVKLRAGTTGSPLERAMQGIEKKAFPGPLRALARRVVKANYNDAREALNVIAEASLLLKPQITNKMTMPWCMWLAARLTLKDEFTNFCAYAGRRAFEVFNIAMEKIGICSFQGTIMNDDEIESIEDKAQVLMMACFGLAYEDFSLVSAMVSHPLKLRNRMKIGNFRVGEKVSTVLSPLLRFTRWAAFAQRFALQANTSREGTQISNSAVFAVERKITTDVQRVEELLNKVQAHEDEPLQTLYKKVREQISIIGRNKSEIKEFLGSSMYDLNDQEKQNPINFRSGAHPFFFEFDPDYNPIRVKRPKKPIAKRNSNISRLEEEGMDENSEIGQAKKMKPLDQLASTSSNIPGEN</sequence>
<gene>
    <name evidence="1" type="primary">NP</name>
</gene>
<reference key="1">
    <citation type="journal article" date="1984" name="Virus Res.">
        <title>Complete nucleotide sequence of the influenza C/California/78 virus nucleoprotein gene.</title>
        <authorList>
            <person name="Nakada S."/>
            <person name="Creager R.S."/>
            <person name="Krystal M."/>
            <person name="Palese P."/>
        </authorList>
    </citation>
    <scope>NUCLEOTIDE SEQUENCE [GENOMIC RNA]</scope>
</reference>
<comment type="function">
    <text evidence="1">Encapsidates the negative strand viral RNA, protecting it from nucleases. The encapsidated genomic RNA is termed the ribonucleoprotein (RNP) and serves as template for transcription and replication. The RNP needs to be localized in the host nucleus to start an infectious cycle, but is too large to diffuse through the nuclear pore complex. NP comprises at least 2 nuclear localization signals that are responsible for the active RNP import into the nucleus through cellular importin alpha/beta pathway. Later in the infection, nclear export of RNPs are mediated through viral proteins NEP interacting with M1 which binds nucleoproteins. It is possible that nucleoprotein binds directly host exportin-1/XPO1 and plays an active role in RNPs nuclear export. M1 interaction with RNP seems to hide nucleoprotein's nuclear localization signals. Soon after a virion infects a new cell, M1 dissociates from the RNP under acidification of the virion driven by M2 protein. Dissociation of M1 from RNP unmasks nucleoprotein's nuclear localization signals, targeting the RNP to the nucleus.</text>
</comment>
<comment type="subunit">
    <text evidence="1">Homomultimerizes to form the nucleocapsid. May bind host exportin-1/XPO1. Binds to viral genomic RNA. Protein-RNA contacts are mediated by a combination of electrostatic interactions between positively charged residues and the phosphate backbone and planar interactions between aromatic side chains and bases.</text>
</comment>
<comment type="subcellular location">
    <subcellularLocation>
        <location evidence="1">Virion</location>
    </subcellularLocation>
    <subcellularLocation>
        <location evidence="1">Host nucleus</location>
    </subcellularLocation>
</comment>
<comment type="PTM">
    <text evidence="1">Late in virus-infected cells, may be cleaved from a 56-kDa protein to a 53-kDa protein by a cellular caspase. This cleavage might be a marker for the onset of apoptosis in infected cells or have a specific function in virus host interaction.</text>
</comment>
<comment type="similarity">
    <text evidence="1">Belongs to the influenza viruses nucleoprotein family.</text>
</comment>
<keyword id="KW-0167">Capsid protein</keyword>
<keyword id="KW-1139">Helical capsid protein</keyword>
<keyword id="KW-1048">Host nucleus</keyword>
<keyword id="KW-0945">Host-virus interaction</keyword>
<keyword id="KW-0687">Ribonucleoprotein</keyword>
<keyword id="KW-0694">RNA-binding</keyword>
<keyword id="KW-0543">Viral nucleoprotein</keyword>
<keyword id="KW-1163">Viral penetration into host nucleus</keyword>
<keyword id="KW-0946">Virion</keyword>
<keyword id="KW-1160">Virus entry into host cell</keyword>